<feature type="initiator methionine" description="Removed" evidence="3">
    <location>
        <position position="1"/>
    </location>
</feature>
<feature type="chain" id="PRO_0000127047" description="Large ribosomal subunit protein eL39">
    <location>
        <begin position="2"/>
        <end position="50"/>
    </location>
</feature>
<feature type="helix" evidence="5">
    <location>
        <begin position="6"/>
        <end position="18"/>
    </location>
</feature>
<feature type="helix" evidence="5">
    <location>
        <begin position="24"/>
        <end position="29"/>
    </location>
</feature>
<feature type="turn" evidence="6">
    <location>
        <begin position="30"/>
        <end position="32"/>
    </location>
</feature>
<feature type="turn" evidence="5">
    <location>
        <begin position="43"/>
        <end position="45"/>
    </location>
</feature>
<protein>
    <recommendedName>
        <fullName evidence="4">Large ribosomal subunit protein eL39</fullName>
    </recommendedName>
    <alternativeName>
        <fullName>50S ribosomal protein L39e</fullName>
    </alternativeName>
    <alternativeName>
        <fullName>Hl39e</fullName>
    </alternativeName>
    <alternativeName>
        <fullName>Hl46e</fullName>
    </alternativeName>
</protein>
<sequence>MGKKSKATKKRLAKLDNQNSRVPAWVMLKTDREVQRNHKRRHWRRNDTDE</sequence>
<evidence type="ECO:0000269" key="1">
    <source>
    </source>
</evidence>
<evidence type="ECO:0000269" key="2">
    <source>
    </source>
</evidence>
<evidence type="ECO:0000269" key="3">
    <source>
    </source>
</evidence>
<evidence type="ECO:0000305" key="4"/>
<evidence type="ECO:0007829" key="5">
    <source>
        <dbReference type="PDB" id="1VQ8"/>
    </source>
</evidence>
<evidence type="ECO:0007829" key="6">
    <source>
        <dbReference type="PDB" id="1YJ9"/>
    </source>
</evidence>
<proteinExistence type="evidence at protein level"/>
<reference key="1">
    <citation type="journal article" date="1990" name="Biochim. Biophys. Acta">
        <title>Evidence for an additional archaebacterial gene cluster in Halobacterium marismortui encoding ribosomal proteins HL46e and HL30.</title>
        <authorList>
            <person name="Bergmann U."/>
            <person name="Arndt E."/>
        </authorList>
    </citation>
    <scope>NUCLEOTIDE SEQUENCE [GENOMIC DNA]</scope>
    <scope>PROTEIN SEQUENCE OF 2-50</scope>
</reference>
<reference key="2">
    <citation type="journal article" date="2004" name="Genome Res.">
        <title>Genome sequence of Haloarcula marismortui: a halophilic archaeon from the Dead Sea.</title>
        <authorList>
            <person name="Baliga N.S."/>
            <person name="Bonneau R."/>
            <person name="Facciotti M.T."/>
            <person name="Pan M."/>
            <person name="Glusman G."/>
            <person name="Deutsch E.W."/>
            <person name="Shannon P."/>
            <person name="Chiu Y."/>
            <person name="Weng R.S."/>
            <person name="Gan R.R."/>
            <person name="Hung P."/>
            <person name="Date S.V."/>
            <person name="Marcotte E."/>
            <person name="Hood L."/>
            <person name="Ng W.V."/>
        </authorList>
    </citation>
    <scope>NUCLEOTIDE SEQUENCE [LARGE SCALE GENOMIC DNA]</scope>
    <source>
        <strain>ATCC 43049 / DSM 3752 / JCM 8966 / VKM B-1809</strain>
    </source>
</reference>
<reference key="3">
    <citation type="journal article" date="2000" name="Science">
        <title>The complete atomic structure of the large ribosomal subunit at 2.4 A resolution.</title>
        <authorList>
            <person name="Ban N."/>
            <person name="Nissen P."/>
            <person name="Hansen J."/>
            <person name="Moore P.B."/>
            <person name="Steitz T.A."/>
        </authorList>
    </citation>
    <scope>X-RAY CRYSTALLOGRAPHY (2.4 ANGSTROMS) OF THE 50S SUBUNIT</scope>
    <source>
        <strain>ATCC 43049 / DSM 3752 / JCM 8966 / VKM B-1809</strain>
    </source>
</reference>
<reference key="4">
    <citation type="journal article" date="2000" name="Science">
        <title>The structural basis of ribosome activity in peptide bond synthesis.</title>
        <authorList>
            <person name="Nissen P."/>
            <person name="Hansen J."/>
            <person name="Ban N."/>
            <person name="Moore P.B."/>
            <person name="Steitz T.A."/>
        </authorList>
    </citation>
    <scope>X-RAY CRYSTALLOGRAPHY (3.0 ANGSTROMS) OF THE 50S SUBUNIT</scope>
    <source>
        <strain>ATCC 43049 / DSM 3752 / JCM 8966 / VKM B-1809</strain>
    </source>
</reference>
<reference key="5">
    <citation type="journal article" date="2002" name="Nat. Struct. Biol.">
        <title>A pre-translocational intermediate in protein synthesis observed in crystals of enzymatically active 50S subunits.</title>
        <authorList>
            <person name="Schmeing T.M."/>
            <person name="Seila A.C."/>
            <person name="Hansen J.L."/>
            <person name="Freeborn B."/>
            <person name="Soukup J.K."/>
            <person name="Scaringe S.A."/>
            <person name="Strobel S.A."/>
            <person name="Moore P.B."/>
            <person name="Steitz T.A."/>
        </authorList>
    </citation>
    <scope>X-RAY CRYSTALLOGRAPHY (3.1 ANGSTROMS) OF THE 50S SUBUNIT</scope>
    <source>
        <strain>ATCC 43049 / DSM 3752 / JCM 8966 / VKM B-1809</strain>
    </source>
</reference>
<reference key="6">
    <citation type="journal article" date="2001" name="EMBO J.">
        <title>The kink-turn: a new RNA secondary structure motif.</title>
        <authorList>
            <person name="Klein D.J."/>
            <person name="Schmeing T.M."/>
            <person name="Moore P.B."/>
            <person name="Steitz T.A."/>
        </authorList>
    </citation>
    <scope>X-RAY CRYSTALLOGRAPHY (2.4 ANGSTROMS) OF THE 50S SUBUNIT</scope>
    <source>
        <strain>ATCC 43049 / DSM 3752 / JCM 8966 / VKM B-1809</strain>
    </source>
</reference>
<reference key="7">
    <citation type="journal article" date="2002" name="Mol. Cell">
        <title>The structures of four macrolide antibiotics bound to the large ribosomal subunit.</title>
        <authorList>
            <person name="Hansen J.L."/>
            <person name="Ippolito J.A."/>
            <person name="Ban N."/>
            <person name="Nissen P."/>
            <person name="Moore P.B."/>
            <person name="Steitz T.A."/>
        </authorList>
    </citation>
    <scope>X-RAY CRYSTALLOGRAPHY (3.0 ANGSTROMS) OF THE 50S SUBUNIT IN COMPLEX WITH FOUR MACROLIDE ANTIBIOTICS</scope>
    <source>
        <strain>ATCC 43049 / DSM 3752 / JCM 8966 / VKM B-1809</strain>
    </source>
</reference>
<reference key="8">
    <citation type="journal article" date="2002" name="Proc. Natl. Acad. Sci. U.S.A.">
        <title>Structural insights into peptide bond formation.</title>
        <authorList>
            <person name="Hansen J.L."/>
            <person name="Schmeing T.M."/>
            <person name="Moore P.B."/>
            <person name="Steitz T.A."/>
        </authorList>
    </citation>
    <scope>X-RAY CRYSTALLOGRAPHY (2.8 ANGSTROMS) OF THE 50S SUBUNIT</scope>
    <source>
        <strain>ATCC 43049 / DSM 3752 / JCM 8966 / VKM B-1809</strain>
    </source>
</reference>
<reference key="9">
    <citation type="journal article" date="2003" name="J. Mol. Biol.">
        <title>Structures of five antibiotics bound at the peptidyl transferase center of the large ribosomal subunit.</title>
        <authorList>
            <person name="Hansen J.L."/>
            <person name="Moore P.B."/>
            <person name="Steitz T.A."/>
        </authorList>
    </citation>
    <scope>X-RAY CRYSTALLOGRAPHY (3.0 ANGSTROMS) OF THE 50S SUBUNIT IN COMPLEX WITH FIVE ANTIBIOTICS AT THE PEPTIDYL TRANSFERASE CENTER</scope>
    <source>
        <strain>ATCC 43049 / DSM 3752 / JCM 8966 / VKM B-1809</strain>
    </source>
</reference>
<reference key="10">
    <citation type="journal article" date="2003" name="RNA">
        <title>Structures of deacylated tRNA mimics bound to the E site of the large ribosomal subunit.</title>
        <authorList>
            <person name="Schmeing T.M."/>
            <person name="Moore P.B."/>
            <person name="Steitz T.A."/>
        </authorList>
    </citation>
    <scope>X-RAY CRYSTALLOGRAPHY (2.9 ANGSTROMS) OF THE 50S SUBUNIT WITH TWO DIFFERENT E SITE SUBSTRATES</scope>
</reference>
<reference key="11">
    <citation type="journal article" date="2013" name="Acta Crystallogr. D">
        <title>Revisiting the Haloarcula marismortui 50S ribosomal subunit model.</title>
        <authorList>
            <person name="Gabdulkhakov A."/>
            <person name="Nikonov S."/>
            <person name="Garber M."/>
        </authorList>
    </citation>
    <scope>X-RAY CRYSTALLOGRAPHY (2.4 ANGSTROMS) OF THE 50S SUBUNIT</scope>
</reference>
<comment type="function">
    <text>Binds to the 23S rRNA. Forms part of the polypeptide exit tunnel.</text>
</comment>
<comment type="subunit">
    <text evidence="1 2">Part of the 50S ribosomal subunit. Interacts weakly with protein L23.</text>
</comment>
<comment type="similarity">
    <text evidence="4">Belongs to the eukaryotic ribosomal protein eL39 family.</text>
</comment>
<organism>
    <name type="scientific">Haloarcula marismortui (strain ATCC 43049 / DSM 3752 / JCM 8966 / VKM B-1809)</name>
    <name type="common">Halobacterium marismortui</name>
    <dbReference type="NCBI Taxonomy" id="272569"/>
    <lineage>
        <taxon>Archaea</taxon>
        <taxon>Methanobacteriati</taxon>
        <taxon>Methanobacteriota</taxon>
        <taxon>Stenosarchaea group</taxon>
        <taxon>Halobacteria</taxon>
        <taxon>Halobacteriales</taxon>
        <taxon>Haloarculaceae</taxon>
        <taxon>Haloarcula</taxon>
    </lineage>
</organism>
<name>RL39_HALMA</name>
<accession>P22452</accession>
<accession>Q5UY30</accession>
<gene>
    <name type="primary">rpl39e</name>
    <name type="ordered locus">rrnAC3112</name>
</gene>
<keyword id="KW-0002">3D-structure</keyword>
<keyword id="KW-0903">Direct protein sequencing</keyword>
<keyword id="KW-1185">Reference proteome</keyword>
<keyword id="KW-0687">Ribonucleoprotein</keyword>
<keyword id="KW-0689">Ribosomal protein</keyword>
<keyword id="KW-0694">RNA-binding</keyword>
<keyword id="KW-0699">rRNA-binding</keyword>
<dbReference type="EMBL" id="X55007">
    <property type="protein sequence ID" value="CAA38750.1"/>
    <property type="molecule type" value="Genomic_DNA"/>
</dbReference>
<dbReference type="EMBL" id="AY596297">
    <property type="protein sequence ID" value="AAV47823.1"/>
    <property type="molecule type" value="Genomic_DNA"/>
</dbReference>
<dbReference type="PIR" id="S13066">
    <property type="entry name" value="R6HS39"/>
</dbReference>
<dbReference type="RefSeq" id="WP_004518346.1">
    <property type="nucleotide sequence ID" value="NZ_CP039138.1"/>
</dbReference>
<dbReference type="PDB" id="1FFK">
    <property type="method" value="X-ray"/>
    <property type="resolution" value="2.40 A"/>
    <property type="chains" value="Y=2-50"/>
</dbReference>
<dbReference type="PDB" id="1JJ2">
    <property type="method" value="X-ray"/>
    <property type="resolution" value="2.40 A"/>
    <property type="chains" value="1=2-49"/>
</dbReference>
<dbReference type="PDB" id="1K73">
    <property type="method" value="X-ray"/>
    <property type="resolution" value="3.01 A"/>
    <property type="chains" value="3=2-49"/>
</dbReference>
<dbReference type="PDB" id="1K8A">
    <property type="method" value="X-ray"/>
    <property type="resolution" value="3.00 A"/>
    <property type="chains" value="3=2-49"/>
</dbReference>
<dbReference type="PDB" id="1K9M">
    <property type="method" value="X-ray"/>
    <property type="resolution" value="3.00 A"/>
    <property type="chains" value="3=2-49"/>
</dbReference>
<dbReference type="PDB" id="1KC8">
    <property type="method" value="X-ray"/>
    <property type="resolution" value="3.01 A"/>
    <property type="chains" value="3=2-49"/>
</dbReference>
<dbReference type="PDB" id="1KD1">
    <property type="method" value="X-ray"/>
    <property type="resolution" value="3.00 A"/>
    <property type="chains" value="3=2-49"/>
</dbReference>
<dbReference type="PDB" id="1KQS">
    <property type="method" value="X-ray"/>
    <property type="resolution" value="3.10 A"/>
    <property type="chains" value="1=2-49"/>
</dbReference>
<dbReference type="PDB" id="1M1K">
    <property type="method" value="X-ray"/>
    <property type="resolution" value="3.20 A"/>
    <property type="chains" value="3=2-49"/>
</dbReference>
<dbReference type="PDB" id="1M90">
    <property type="method" value="X-ray"/>
    <property type="resolution" value="2.80 A"/>
    <property type="chains" value="3=2-49"/>
</dbReference>
<dbReference type="PDB" id="1N8R">
    <property type="method" value="X-ray"/>
    <property type="resolution" value="3.00 A"/>
    <property type="chains" value="3=2-49"/>
</dbReference>
<dbReference type="PDB" id="1NJI">
    <property type="method" value="X-ray"/>
    <property type="resolution" value="3.00 A"/>
    <property type="chains" value="3=2-49"/>
</dbReference>
<dbReference type="PDB" id="1Q7Y">
    <property type="method" value="X-ray"/>
    <property type="resolution" value="3.20 A"/>
    <property type="chains" value="3=2-49"/>
</dbReference>
<dbReference type="PDB" id="1Q81">
    <property type="method" value="X-ray"/>
    <property type="resolution" value="2.95 A"/>
    <property type="chains" value="3=2-49"/>
</dbReference>
<dbReference type="PDB" id="1Q82">
    <property type="method" value="X-ray"/>
    <property type="resolution" value="2.98 A"/>
    <property type="chains" value="3=2-49"/>
</dbReference>
<dbReference type="PDB" id="1Q86">
    <property type="method" value="X-ray"/>
    <property type="resolution" value="3.00 A"/>
    <property type="chains" value="3=2-49"/>
</dbReference>
<dbReference type="PDB" id="1QVF">
    <property type="method" value="X-ray"/>
    <property type="resolution" value="3.10 A"/>
    <property type="chains" value="1=2-49"/>
</dbReference>
<dbReference type="PDB" id="1QVG">
    <property type="method" value="X-ray"/>
    <property type="resolution" value="2.90 A"/>
    <property type="chains" value="1=2-49"/>
</dbReference>
<dbReference type="PDB" id="1S72">
    <property type="method" value="X-ray"/>
    <property type="resolution" value="2.40 A"/>
    <property type="chains" value="2=1-50"/>
</dbReference>
<dbReference type="PDB" id="1VQ4">
    <property type="method" value="X-ray"/>
    <property type="resolution" value="2.70 A"/>
    <property type="chains" value="2=1-50"/>
</dbReference>
<dbReference type="PDB" id="1VQ5">
    <property type="method" value="X-ray"/>
    <property type="resolution" value="2.60 A"/>
    <property type="chains" value="2=1-50"/>
</dbReference>
<dbReference type="PDB" id="1VQ6">
    <property type="method" value="X-ray"/>
    <property type="resolution" value="2.70 A"/>
    <property type="chains" value="2=1-50"/>
</dbReference>
<dbReference type="PDB" id="1VQ7">
    <property type="method" value="X-ray"/>
    <property type="resolution" value="2.50 A"/>
    <property type="chains" value="2=1-50"/>
</dbReference>
<dbReference type="PDB" id="1VQ8">
    <property type="method" value="X-ray"/>
    <property type="resolution" value="2.20 A"/>
    <property type="chains" value="2=1-50"/>
</dbReference>
<dbReference type="PDB" id="1VQ9">
    <property type="method" value="X-ray"/>
    <property type="resolution" value="2.40 A"/>
    <property type="chains" value="2=1-50"/>
</dbReference>
<dbReference type="PDB" id="1VQK">
    <property type="method" value="X-ray"/>
    <property type="resolution" value="2.30 A"/>
    <property type="chains" value="2=1-50"/>
</dbReference>
<dbReference type="PDB" id="1VQL">
    <property type="method" value="X-ray"/>
    <property type="resolution" value="2.30 A"/>
    <property type="chains" value="2=1-50"/>
</dbReference>
<dbReference type="PDB" id="1VQM">
    <property type="method" value="X-ray"/>
    <property type="resolution" value="2.30 A"/>
    <property type="chains" value="2=1-50"/>
</dbReference>
<dbReference type="PDB" id="1VQN">
    <property type="method" value="X-ray"/>
    <property type="resolution" value="2.40 A"/>
    <property type="chains" value="2=1-50"/>
</dbReference>
<dbReference type="PDB" id="1VQO">
    <property type="method" value="X-ray"/>
    <property type="resolution" value="2.20 A"/>
    <property type="chains" value="2=1-50"/>
</dbReference>
<dbReference type="PDB" id="1VQP">
    <property type="method" value="X-ray"/>
    <property type="resolution" value="2.25 A"/>
    <property type="chains" value="2=1-50"/>
</dbReference>
<dbReference type="PDB" id="1W2B">
    <property type="method" value="X-ray"/>
    <property type="resolution" value="3.50 A"/>
    <property type="chains" value="1=2-49"/>
</dbReference>
<dbReference type="PDB" id="1YHQ">
    <property type="method" value="X-ray"/>
    <property type="resolution" value="2.40 A"/>
    <property type="chains" value="2=1-50"/>
</dbReference>
<dbReference type="PDB" id="1YI2">
    <property type="method" value="X-ray"/>
    <property type="resolution" value="2.65 A"/>
    <property type="chains" value="2=1-50"/>
</dbReference>
<dbReference type="PDB" id="1YIJ">
    <property type="method" value="X-ray"/>
    <property type="resolution" value="2.60 A"/>
    <property type="chains" value="2=1-50"/>
</dbReference>
<dbReference type="PDB" id="1YIT">
    <property type="method" value="X-ray"/>
    <property type="resolution" value="2.80 A"/>
    <property type="chains" value="2=1-50"/>
</dbReference>
<dbReference type="PDB" id="1YJ9">
    <property type="method" value="X-ray"/>
    <property type="resolution" value="2.90 A"/>
    <property type="chains" value="2=1-50"/>
</dbReference>
<dbReference type="PDB" id="1YJN">
    <property type="method" value="X-ray"/>
    <property type="resolution" value="3.00 A"/>
    <property type="chains" value="2=1-50"/>
</dbReference>
<dbReference type="PDB" id="1YJW">
    <property type="method" value="X-ray"/>
    <property type="resolution" value="2.90 A"/>
    <property type="chains" value="2=1-50"/>
</dbReference>
<dbReference type="PDB" id="2OTJ">
    <property type="method" value="X-ray"/>
    <property type="resolution" value="2.90 A"/>
    <property type="chains" value="2=1-50"/>
</dbReference>
<dbReference type="PDB" id="2OTL">
    <property type="method" value="X-ray"/>
    <property type="resolution" value="2.70 A"/>
    <property type="chains" value="2=1-50"/>
</dbReference>
<dbReference type="PDB" id="2QA4">
    <property type="method" value="X-ray"/>
    <property type="resolution" value="3.00 A"/>
    <property type="chains" value="2=1-50"/>
</dbReference>
<dbReference type="PDB" id="2QEX">
    <property type="method" value="X-ray"/>
    <property type="resolution" value="2.90 A"/>
    <property type="chains" value="2=1-50"/>
</dbReference>
<dbReference type="PDB" id="3CC2">
    <property type="method" value="X-ray"/>
    <property type="resolution" value="2.40 A"/>
    <property type="chains" value="2=1-50"/>
</dbReference>
<dbReference type="PDB" id="3CC4">
    <property type="method" value="X-ray"/>
    <property type="resolution" value="2.70 A"/>
    <property type="chains" value="2=1-50"/>
</dbReference>
<dbReference type="PDB" id="3CC7">
    <property type="method" value="X-ray"/>
    <property type="resolution" value="2.70 A"/>
    <property type="chains" value="2=1-50"/>
</dbReference>
<dbReference type="PDB" id="3CCE">
    <property type="method" value="X-ray"/>
    <property type="resolution" value="2.75 A"/>
    <property type="chains" value="2=1-50"/>
</dbReference>
<dbReference type="PDB" id="3CCJ">
    <property type="method" value="X-ray"/>
    <property type="resolution" value="2.70 A"/>
    <property type="chains" value="2=1-50"/>
</dbReference>
<dbReference type="PDB" id="3CCL">
    <property type="method" value="X-ray"/>
    <property type="resolution" value="2.90 A"/>
    <property type="chains" value="2=1-50"/>
</dbReference>
<dbReference type="PDB" id="3CCM">
    <property type="method" value="X-ray"/>
    <property type="resolution" value="2.55 A"/>
    <property type="chains" value="2=1-50"/>
</dbReference>
<dbReference type="PDB" id="3CCQ">
    <property type="method" value="X-ray"/>
    <property type="resolution" value="2.90 A"/>
    <property type="chains" value="2=1-50"/>
</dbReference>
<dbReference type="PDB" id="3CCR">
    <property type="method" value="X-ray"/>
    <property type="resolution" value="3.00 A"/>
    <property type="chains" value="2=1-50"/>
</dbReference>
<dbReference type="PDB" id="3CCS">
    <property type="method" value="X-ray"/>
    <property type="resolution" value="2.95 A"/>
    <property type="chains" value="2=1-50"/>
</dbReference>
<dbReference type="PDB" id="3CCU">
    <property type="method" value="X-ray"/>
    <property type="resolution" value="2.80 A"/>
    <property type="chains" value="2=1-50"/>
</dbReference>
<dbReference type="PDB" id="3CCV">
    <property type="method" value="X-ray"/>
    <property type="resolution" value="2.90 A"/>
    <property type="chains" value="2=1-50"/>
</dbReference>
<dbReference type="PDB" id="3CD6">
    <property type="method" value="X-ray"/>
    <property type="resolution" value="2.75 A"/>
    <property type="chains" value="2=1-50"/>
</dbReference>
<dbReference type="PDB" id="3CMA">
    <property type="method" value="X-ray"/>
    <property type="resolution" value="2.80 A"/>
    <property type="chains" value="2=1-50"/>
</dbReference>
<dbReference type="PDB" id="3CME">
    <property type="method" value="X-ray"/>
    <property type="resolution" value="2.95 A"/>
    <property type="chains" value="2=1-50"/>
</dbReference>
<dbReference type="PDB" id="3CPW">
    <property type="method" value="X-ray"/>
    <property type="resolution" value="2.70 A"/>
    <property type="chains" value="1=1-50"/>
</dbReference>
<dbReference type="PDB" id="3CXC">
    <property type="method" value="X-ray"/>
    <property type="resolution" value="3.00 A"/>
    <property type="chains" value="1=2-50"/>
</dbReference>
<dbReference type="PDB" id="3G4S">
    <property type="method" value="X-ray"/>
    <property type="resolution" value="3.20 A"/>
    <property type="chains" value="2=1-50"/>
</dbReference>
<dbReference type="PDB" id="3G6E">
    <property type="method" value="X-ray"/>
    <property type="resolution" value="2.70 A"/>
    <property type="chains" value="2=1-50"/>
</dbReference>
<dbReference type="PDB" id="3G71">
    <property type="method" value="X-ray"/>
    <property type="resolution" value="2.85 A"/>
    <property type="chains" value="2=1-50"/>
</dbReference>
<dbReference type="PDB" id="3I55">
    <property type="method" value="X-ray"/>
    <property type="resolution" value="3.11 A"/>
    <property type="chains" value="2=1-50"/>
</dbReference>
<dbReference type="PDB" id="3I56">
    <property type="method" value="X-ray"/>
    <property type="resolution" value="2.90 A"/>
    <property type="chains" value="2=1-50"/>
</dbReference>
<dbReference type="PDB" id="3OW2">
    <property type="method" value="X-ray"/>
    <property type="resolution" value="2.70 A"/>
    <property type="chains" value="1=2-50"/>
</dbReference>
<dbReference type="PDB" id="4ADX">
    <property type="method" value="EM"/>
    <property type="resolution" value="6.60 A"/>
    <property type="chains" value="2=1-50"/>
</dbReference>
<dbReference type="PDB" id="4V9F">
    <property type="method" value="X-ray"/>
    <property type="resolution" value="2.40 A"/>
    <property type="chains" value="2=1-50"/>
</dbReference>
<dbReference type="PDBsum" id="1FFK"/>
<dbReference type="PDBsum" id="1JJ2"/>
<dbReference type="PDBsum" id="1K73"/>
<dbReference type="PDBsum" id="1K8A"/>
<dbReference type="PDBsum" id="1K9M"/>
<dbReference type="PDBsum" id="1KC8"/>
<dbReference type="PDBsum" id="1KD1"/>
<dbReference type="PDBsum" id="1KQS"/>
<dbReference type="PDBsum" id="1M1K"/>
<dbReference type="PDBsum" id="1M90"/>
<dbReference type="PDBsum" id="1N8R"/>
<dbReference type="PDBsum" id="1NJI"/>
<dbReference type="PDBsum" id="1Q7Y"/>
<dbReference type="PDBsum" id="1Q81"/>
<dbReference type="PDBsum" id="1Q82"/>
<dbReference type="PDBsum" id="1Q86"/>
<dbReference type="PDBsum" id="1QVF"/>
<dbReference type="PDBsum" id="1QVG"/>
<dbReference type="PDBsum" id="1S72"/>
<dbReference type="PDBsum" id="1VQ4"/>
<dbReference type="PDBsum" id="1VQ5"/>
<dbReference type="PDBsum" id="1VQ6"/>
<dbReference type="PDBsum" id="1VQ7"/>
<dbReference type="PDBsum" id="1VQ8"/>
<dbReference type="PDBsum" id="1VQ9"/>
<dbReference type="PDBsum" id="1VQK"/>
<dbReference type="PDBsum" id="1VQL"/>
<dbReference type="PDBsum" id="1VQM"/>
<dbReference type="PDBsum" id="1VQN"/>
<dbReference type="PDBsum" id="1VQO"/>
<dbReference type="PDBsum" id="1VQP"/>
<dbReference type="PDBsum" id="1W2B"/>
<dbReference type="PDBsum" id="1YHQ"/>
<dbReference type="PDBsum" id="1YI2"/>
<dbReference type="PDBsum" id="1YIJ"/>
<dbReference type="PDBsum" id="1YIT"/>
<dbReference type="PDBsum" id="1YJ9"/>
<dbReference type="PDBsum" id="1YJN"/>
<dbReference type="PDBsum" id="1YJW"/>
<dbReference type="PDBsum" id="2OTJ"/>
<dbReference type="PDBsum" id="2OTL"/>
<dbReference type="PDBsum" id="2QA4"/>
<dbReference type="PDBsum" id="2QEX"/>
<dbReference type="PDBsum" id="3CC2"/>
<dbReference type="PDBsum" id="3CC4"/>
<dbReference type="PDBsum" id="3CC7"/>
<dbReference type="PDBsum" id="3CCE"/>
<dbReference type="PDBsum" id="3CCJ"/>
<dbReference type="PDBsum" id="3CCL"/>
<dbReference type="PDBsum" id="3CCM"/>
<dbReference type="PDBsum" id="3CCQ"/>
<dbReference type="PDBsum" id="3CCR"/>
<dbReference type="PDBsum" id="3CCS"/>
<dbReference type="PDBsum" id="3CCU"/>
<dbReference type="PDBsum" id="3CCV"/>
<dbReference type="PDBsum" id="3CD6"/>
<dbReference type="PDBsum" id="3CMA"/>
<dbReference type="PDBsum" id="3CME"/>
<dbReference type="PDBsum" id="3CPW"/>
<dbReference type="PDBsum" id="3CXC"/>
<dbReference type="PDBsum" id="3G4S"/>
<dbReference type="PDBsum" id="3G6E"/>
<dbReference type="PDBsum" id="3G71"/>
<dbReference type="PDBsum" id="3I55"/>
<dbReference type="PDBsum" id="3I56"/>
<dbReference type="PDBsum" id="3OW2"/>
<dbReference type="PDBsum" id="4ADX"/>
<dbReference type="PDBsum" id="4V9F"/>
<dbReference type="SMR" id="P22452"/>
<dbReference type="IntAct" id="P22452">
    <property type="interactions" value="2"/>
</dbReference>
<dbReference type="STRING" id="272569.rrnAC3112"/>
<dbReference type="PaxDb" id="272569-rrnAC3112"/>
<dbReference type="EnsemblBacteria" id="AAV47823">
    <property type="protein sequence ID" value="AAV47823"/>
    <property type="gene ID" value="rrnAC3112"/>
</dbReference>
<dbReference type="KEGG" id="hma:rrnAC3112"/>
<dbReference type="PATRIC" id="fig|272569.17.peg.3654"/>
<dbReference type="eggNOG" id="arCOG04177">
    <property type="taxonomic scope" value="Archaea"/>
</dbReference>
<dbReference type="HOGENOM" id="CLU_181948_4_0_2"/>
<dbReference type="EvolutionaryTrace" id="P22452"/>
<dbReference type="Proteomes" id="UP000001169">
    <property type="component" value="Chromosome I"/>
</dbReference>
<dbReference type="GO" id="GO:1990904">
    <property type="term" value="C:ribonucleoprotein complex"/>
    <property type="evidence" value="ECO:0007669"/>
    <property type="project" value="UniProtKB-KW"/>
</dbReference>
<dbReference type="GO" id="GO:0005840">
    <property type="term" value="C:ribosome"/>
    <property type="evidence" value="ECO:0007669"/>
    <property type="project" value="UniProtKB-KW"/>
</dbReference>
<dbReference type="GO" id="GO:0019843">
    <property type="term" value="F:rRNA binding"/>
    <property type="evidence" value="ECO:0007669"/>
    <property type="project" value="UniProtKB-KW"/>
</dbReference>
<dbReference type="GO" id="GO:0003735">
    <property type="term" value="F:structural constituent of ribosome"/>
    <property type="evidence" value="ECO:0007669"/>
    <property type="project" value="InterPro"/>
</dbReference>
<dbReference type="GO" id="GO:0006412">
    <property type="term" value="P:translation"/>
    <property type="evidence" value="ECO:0007669"/>
    <property type="project" value="UniProtKB-UniRule"/>
</dbReference>
<dbReference type="FunFam" id="1.10.1620.10:FF:000001">
    <property type="entry name" value="60S ribosomal protein-like L39"/>
    <property type="match status" value="1"/>
</dbReference>
<dbReference type="Gene3D" id="1.10.1620.10">
    <property type="entry name" value="Ribosomal protein L39e"/>
    <property type="match status" value="1"/>
</dbReference>
<dbReference type="HAMAP" id="MF_00629">
    <property type="entry name" value="Ribosomal_eL39"/>
    <property type="match status" value="1"/>
</dbReference>
<dbReference type="InterPro" id="IPR000077">
    <property type="entry name" value="Ribosomal_eL39"/>
</dbReference>
<dbReference type="InterPro" id="IPR020083">
    <property type="entry name" value="Ribosomal_eL39_CS"/>
</dbReference>
<dbReference type="InterPro" id="IPR023626">
    <property type="entry name" value="Ribosomal_eL39_dom_sf"/>
</dbReference>
<dbReference type="NCBIfam" id="NF002316">
    <property type="entry name" value="PRK01242.1"/>
    <property type="match status" value="1"/>
</dbReference>
<dbReference type="Pfam" id="PF00832">
    <property type="entry name" value="Ribosomal_L39"/>
    <property type="match status" value="1"/>
</dbReference>
<dbReference type="SUPFAM" id="SSF48662">
    <property type="entry name" value="Ribosomal protein L39e"/>
    <property type="match status" value="1"/>
</dbReference>
<dbReference type="PROSITE" id="PS00051">
    <property type="entry name" value="RIBOSOMAL_L39E"/>
    <property type="match status" value="1"/>
</dbReference>